<gene>
    <name type="primary">HN</name>
</gene>
<organism>
    <name type="scientific">Human parainfluenza 3 virus (strain Tex/9305/82)</name>
    <name type="common">HPIV-3</name>
    <dbReference type="NCBI Taxonomy" id="11220"/>
    <lineage>
        <taxon>Viruses</taxon>
        <taxon>Riboviria</taxon>
        <taxon>Orthornavirae</taxon>
        <taxon>Negarnaviricota</taxon>
        <taxon>Haploviricotina</taxon>
        <taxon>Monjiviricetes</taxon>
        <taxon>Mononegavirales</taxon>
        <taxon>Paramyxoviridae</taxon>
        <taxon>Feraresvirinae</taxon>
        <taxon>Respirovirus</taxon>
        <taxon>Respirovirus pneumoniae</taxon>
    </lineage>
</organism>
<feature type="chain" id="PRO_0000142628" description="Hemagglutinin-neuraminidase">
    <location>
        <begin position="1"/>
        <end position="572"/>
    </location>
</feature>
<feature type="topological domain" description="Intravirion" evidence="5">
    <location>
        <begin position="1"/>
        <end position="31"/>
    </location>
</feature>
<feature type="transmembrane region" description="Helical" evidence="5">
    <location>
        <begin position="32"/>
        <end position="52"/>
    </location>
</feature>
<feature type="topological domain" description="Virion surface" evidence="5">
    <location>
        <begin position="53"/>
        <end position="572"/>
    </location>
</feature>
<feature type="region of interest" description="Involved in neuraminidase activity" evidence="3">
    <location>
        <begin position="252"/>
        <end position="257"/>
    </location>
</feature>
<feature type="glycosylation site" description="N-linked (GlcNAc...) asparagine; by host" evidence="5">
    <location>
        <position position="308"/>
    </location>
</feature>
<feature type="glycosylation site" description="N-linked (GlcNAc...) asparagine; by host" evidence="5">
    <location>
        <position position="351"/>
    </location>
</feature>
<feature type="glycosylation site" description="N-linked (GlcNAc...) asparagine; by host" evidence="5">
    <location>
        <position position="523"/>
    </location>
</feature>
<feature type="disulfide bond" evidence="4">
    <location>
        <begin position="190"/>
        <end position="214"/>
    </location>
</feature>
<feature type="disulfide bond" evidence="4">
    <location>
        <begin position="256"/>
        <end position="269"/>
    </location>
</feature>
<feature type="disulfide bond" evidence="4">
    <location>
        <begin position="355"/>
        <end position="469"/>
    </location>
</feature>
<feature type="disulfide bond" evidence="4">
    <location>
        <begin position="463"/>
        <end position="473"/>
    </location>
</feature>
<feature type="disulfide bond" evidence="4">
    <location>
        <begin position="535"/>
        <end position="544"/>
    </location>
</feature>
<protein>
    <recommendedName>
        <fullName>Hemagglutinin-neuraminidase</fullName>
        <ecNumber evidence="4">3.2.1.18</ecNumber>
    </recommendedName>
</protein>
<keyword id="KW-1015">Disulfide bond</keyword>
<keyword id="KW-0325">Glycoprotein</keyword>
<keyword id="KW-0348">Hemagglutinin</keyword>
<keyword id="KW-1032">Host cell membrane</keyword>
<keyword id="KW-1043">Host membrane</keyword>
<keyword id="KW-0945">Host-virus interaction</keyword>
<keyword id="KW-0378">Hydrolase</keyword>
<keyword id="KW-0472">Membrane</keyword>
<keyword id="KW-0735">Signal-anchor</keyword>
<keyword id="KW-0812">Transmembrane</keyword>
<keyword id="KW-1133">Transmembrane helix</keyword>
<keyword id="KW-1161">Viral attachment to host cell</keyword>
<keyword id="KW-0261">Viral envelope protein</keyword>
<keyword id="KW-0946">Virion</keyword>
<keyword id="KW-1160">Virus entry into host cell</keyword>
<dbReference type="EC" id="3.2.1.18" evidence="4"/>
<dbReference type="EMBL" id="M18763">
    <property type="protein sequence ID" value="AAA46850.1"/>
    <property type="molecule type" value="Genomic_RNA"/>
</dbReference>
<dbReference type="PIR" id="E29970">
    <property type="entry name" value="HNNZ82"/>
</dbReference>
<dbReference type="SMR" id="P12563"/>
<dbReference type="CAZy" id="GH83">
    <property type="family name" value="Glycoside Hydrolase Family 83"/>
</dbReference>
<dbReference type="GlyCosmos" id="P12563">
    <property type="glycosylation" value="3 sites, No reported glycans"/>
</dbReference>
<dbReference type="GO" id="GO:0020002">
    <property type="term" value="C:host cell plasma membrane"/>
    <property type="evidence" value="ECO:0007669"/>
    <property type="project" value="UniProtKB-SubCell"/>
</dbReference>
<dbReference type="GO" id="GO:0016020">
    <property type="term" value="C:membrane"/>
    <property type="evidence" value="ECO:0007669"/>
    <property type="project" value="UniProtKB-KW"/>
</dbReference>
<dbReference type="GO" id="GO:0019031">
    <property type="term" value="C:viral envelope"/>
    <property type="evidence" value="ECO:0007669"/>
    <property type="project" value="UniProtKB-KW"/>
</dbReference>
<dbReference type="GO" id="GO:0055036">
    <property type="term" value="C:virion membrane"/>
    <property type="evidence" value="ECO:0007669"/>
    <property type="project" value="UniProtKB-SubCell"/>
</dbReference>
<dbReference type="GO" id="GO:0004308">
    <property type="term" value="F:exo-alpha-sialidase activity"/>
    <property type="evidence" value="ECO:0007669"/>
    <property type="project" value="UniProtKB-EC"/>
</dbReference>
<dbReference type="GO" id="GO:0046789">
    <property type="term" value="F:host cell surface receptor binding"/>
    <property type="evidence" value="ECO:0007669"/>
    <property type="project" value="InterPro"/>
</dbReference>
<dbReference type="GO" id="GO:0046718">
    <property type="term" value="P:symbiont entry into host cell"/>
    <property type="evidence" value="ECO:0007669"/>
    <property type="project" value="UniProtKB-KW"/>
</dbReference>
<dbReference type="GO" id="GO:0019062">
    <property type="term" value="P:virion attachment to host cell"/>
    <property type="evidence" value="ECO:0007669"/>
    <property type="project" value="UniProtKB-KW"/>
</dbReference>
<dbReference type="CDD" id="cd15469">
    <property type="entry name" value="HN"/>
    <property type="match status" value="1"/>
</dbReference>
<dbReference type="Gene3D" id="2.120.10.10">
    <property type="match status" value="1"/>
</dbReference>
<dbReference type="InterPro" id="IPR016285">
    <property type="entry name" value="Hemagglutn-neuramid"/>
</dbReference>
<dbReference type="InterPro" id="IPR000665">
    <property type="entry name" value="Hemagglutn/HN"/>
</dbReference>
<dbReference type="InterPro" id="IPR036278">
    <property type="entry name" value="Sialidase_sf"/>
</dbReference>
<dbReference type="Pfam" id="PF00423">
    <property type="entry name" value="HN"/>
    <property type="match status" value="1"/>
</dbReference>
<dbReference type="PIRSF" id="PIRSF001072">
    <property type="entry name" value="Hemagglut-neuramid_paramyxoV"/>
    <property type="match status" value="1"/>
</dbReference>
<dbReference type="SUPFAM" id="SSF50939">
    <property type="entry name" value="Sialidases"/>
    <property type="match status" value="1"/>
</dbReference>
<accession>P12563</accession>
<comment type="function">
    <text evidence="1">Attaches the virus to sialic acid-containing cell receptors and thereby initiating infection. Binding of HN protein to the receptor induces a conformational change that allows the F protein to trigger virion/cell membranes fusion (By similarity).</text>
</comment>
<comment type="function">
    <text evidence="1">Neuraminidase activity ensures the efficient spread of the virus by dissociating the mature virions from the neuraminic acid containing glycoproteins.</text>
</comment>
<comment type="catalytic activity">
    <reaction evidence="4">
        <text>Hydrolysis of alpha-(2-&gt;3)-, alpha-(2-&gt;6)-, alpha-(2-&gt;8)- glycosidic linkages of terminal sialic acid residues in oligosaccharides, glycoproteins, glycolipids, colominic acid and synthetic substrates.</text>
        <dbReference type="EC" id="3.2.1.18"/>
    </reaction>
</comment>
<comment type="subunit">
    <text evidence="2 4">Homotetramer; composed of disulfide-linked homodimers (By similarity). Interacts with F protein trimer (By similarity).</text>
</comment>
<comment type="subcellular location">
    <subcellularLocation>
        <location evidence="6">Virion membrane</location>
        <topology evidence="6">Single-pass type II membrane protein</topology>
    </subcellularLocation>
    <subcellularLocation>
        <location evidence="6">Host cell membrane</location>
        <topology evidence="6">Single-pass type II membrane protein</topology>
    </subcellularLocation>
</comment>
<comment type="domain">
    <text evidence="4">The C-terminus (head domain) is involved in binding the cellular receptor.</text>
</comment>
<comment type="similarity">
    <text evidence="6">Belongs to the paramyxoviruses hemagglutinin-neuraminidase family.</text>
</comment>
<proteinExistence type="inferred from homology"/>
<reference key="1">
    <citation type="journal article" date="1988" name="Virology">
        <title>Nucleotide and deduced amino acid sequence of hemagglutinin-neuraminidase genes of human type 3 parainfluenza viruses isolated from 1957 to 1983.</title>
        <authorList>
            <person name="van Wyke Coelingh K.L."/>
            <person name="Winter C.C."/>
            <person name="Murphy B.R."/>
        </authorList>
    </citation>
    <scope>NUCLEOTIDE SEQUENCE [GENOMIC RNA]</scope>
</reference>
<evidence type="ECO:0000250" key="1"/>
<evidence type="ECO:0000250" key="2">
    <source>
        <dbReference type="UniProtKB" id="P04853"/>
    </source>
</evidence>
<evidence type="ECO:0000250" key="3">
    <source>
        <dbReference type="UniProtKB" id="Q91UL0"/>
    </source>
</evidence>
<evidence type="ECO:0000250" key="4">
    <source>
        <dbReference type="UniProtKB" id="Q9WAF5"/>
    </source>
</evidence>
<evidence type="ECO:0000255" key="5"/>
<evidence type="ECO:0000305" key="6"/>
<name>HN_PI3HU</name>
<sequence>MEYWKHTNHRKDAGNELETSMATHGNKLTNKITYILWTIILVLLSIVLIIVLINSIKSEKAHESLLQDINNEFMEITEKIQMASDNTNDLIQSGVNTRLLTIQSHVQNYIPISLTQQMSDLRKFISEIIIRNDNQEVPPQRITHDVGIKPLNPDDFWRCTSGLPSLMKTPKIRLMPGPGLLTMPTTVDGCVRTPSLVINDLIYAYTSNLITRGCQDIGKSYQVLQIGIITVNSDLVPDLNPRISHTFNINDNRKSCSLALLNTDVYQLCSTPKVDERSDYASSGIEDIVLDIVNYDGSISTTRFKNNNISFDQPYAALYPSVGPGIYYKGKIIFLGYGGLEHPINENVICNTTGCPGKTQRDCNQASHSPWFSDRRMVNSIIVVDKGLNSIPKLKVWTISMRQNYWGSEGRLLLLGNKIYIYTRSTSWHSKLQLGIIDITDYSDIRIKWTWHNVLSRPGNNECPWGHSCPDGCITGVYTDAYPLNPTGSIVSSVILDSQKSRVNPVITYSTATERVNELAIRNKTLSAGYTTTSCITHYNKGYCFHIVEINHKSLDTFQPMLFKTEVPKSCS</sequence>
<organismHost>
    <name type="scientific">Homo sapiens</name>
    <name type="common">Human</name>
    <dbReference type="NCBI Taxonomy" id="9606"/>
</organismHost>